<sequence length="195" mass="21802">MTGSTETRQKEVKEPQVDVSDDSDNEAVEQELTEEQRRVAEAAGLGDHIDKQAKQSRSEKKARKLFSKLGLKQVTGVSRVCIRKSKNILFVINKPDVFKSPGSDTYIIFGEAKIEDLTQHAQMSAIENLKPTREAPQLKTVEEDENEDVEEDSTGIEEKDIELVISQANTTRNKAIRALKEADNDIVNAIMSLTM</sequence>
<keyword id="KW-0963">Cytoplasm</keyword>
<keyword id="KW-0653">Protein transport</keyword>
<keyword id="KW-1185">Reference proteome</keyword>
<keyword id="KW-0813">Transport</keyword>
<feature type="chain" id="PRO_0000135585" description="Nascent polypeptide-associated complex subunit alpha">
    <location>
        <begin position="1"/>
        <end position="195"/>
    </location>
</feature>
<feature type="domain" description="NAC-A/B" evidence="2">
    <location>
        <begin position="56"/>
        <end position="121"/>
    </location>
</feature>
<feature type="region of interest" description="Disordered" evidence="3">
    <location>
        <begin position="1"/>
        <end position="59"/>
    </location>
</feature>
<feature type="region of interest" description="Disordered" evidence="3">
    <location>
        <begin position="132"/>
        <end position="153"/>
    </location>
</feature>
<feature type="compositionally biased region" description="Basic and acidic residues" evidence="3">
    <location>
        <begin position="7"/>
        <end position="16"/>
    </location>
</feature>
<feature type="compositionally biased region" description="Acidic residues" evidence="3">
    <location>
        <begin position="19"/>
        <end position="33"/>
    </location>
</feature>
<feature type="compositionally biased region" description="Basic and acidic residues" evidence="3">
    <location>
        <begin position="47"/>
        <end position="59"/>
    </location>
</feature>
<feature type="compositionally biased region" description="Acidic residues" evidence="3">
    <location>
        <begin position="142"/>
        <end position="153"/>
    </location>
</feature>
<reference key="1">
    <citation type="journal article" date="1998" name="Science">
        <title>Genome sequence of the nematode C. elegans: a platform for investigating biology.</title>
        <authorList>
            <consortium name="The C. elegans sequencing consortium"/>
        </authorList>
    </citation>
    <scope>NUCLEOTIDE SEQUENCE [LARGE SCALE GENOMIC DNA]</scope>
    <source>
        <strain>Bristol N2</strain>
    </source>
</reference>
<reference key="2">
    <citation type="journal article" date="2012" name="PLoS ONE">
        <title>Depletion of the C. elegans NAC engages the unfolded protein response, resulting in increased chaperone expression and apoptosis.</title>
        <authorList>
            <person name="Arsenovic P.T."/>
            <person name="Maldonado A.T."/>
            <person name="Colleluori V.D."/>
            <person name="Bloss T.A."/>
        </authorList>
    </citation>
    <scope>FUNCTION</scope>
    <scope>DISRUPTION PHENOTYPE</scope>
</reference>
<dbReference type="EMBL" id="BX284601">
    <property type="protein sequence ID" value="CCD71933.1"/>
    <property type="molecule type" value="Genomic_DNA"/>
</dbReference>
<dbReference type="RefSeq" id="NP_490749.1">
    <property type="nucleotide sequence ID" value="NM_058348.6"/>
</dbReference>
<dbReference type="EMDB" id="EMD-4938"/>
<dbReference type="SMR" id="Q86S66"/>
<dbReference type="BioGRID" id="37146">
    <property type="interactions" value="24"/>
</dbReference>
<dbReference type="ComplexPortal" id="CPX-5744">
    <property type="entry name" value="Nascent polypeptide-associated complex"/>
</dbReference>
<dbReference type="DIP" id="DIP-25064N"/>
<dbReference type="FunCoup" id="Q86S66">
    <property type="interactions" value="1980"/>
</dbReference>
<dbReference type="IntAct" id="Q86S66">
    <property type="interactions" value="6"/>
</dbReference>
<dbReference type="STRING" id="6239.Y65B4BR.5b.1"/>
<dbReference type="iPTMnet" id="Q86S66"/>
<dbReference type="PaxDb" id="6239-Y65B4BR.5b"/>
<dbReference type="PeptideAtlas" id="Q86S66"/>
<dbReference type="EnsemblMetazoa" id="Y65B4BR.5.1">
    <property type="protein sequence ID" value="Y65B4BR.5.1"/>
    <property type="gene ID" value="WBGene00022042"/>
</dbReference>
<dbReference type="GeneID" id="171646"/>
<dbReference type="KEGG" id="cel:CELE_Y65B4BR.5"/>
<dbReference type="UCSC" id="Y65B4BR.5a.1">
    <property type="organism name" value="c. elegans"/>
</dbReference>
<dbReference type="AGR" id="WB:WBGene00022042"/>
<dbReference type="CTD" id="171646"/>
<dbReference type="WormBase" id="Y65B4BR.5">
    <property type="protein sequence ID" value="CE22740"/>
    <property type="gene ID" value="WBGene00022042"/>
    <property type="gene designation" value="icd-2"/>
</dbReference>
<dbReference type="eggNOG" id="KOG2239">
    <property type="taxonomic scope" value="Eukaryota"/>
</dbReference>
<dbReference type="GeneTree" id="ENSGT00440000033468"/>
<dbReference type="InParanoid" id="Q86S66"/>
<dbReference type="OrthoDB" id="3169036at2759"/>
<dbReference type="PhylomeDB" id="Q86S66"/>
<dbReference type="PRO" id="PR:Q86S66"/>
<dbReference type="Proteomes" id="UP000001940">
    <property type="component" value="Chromosome I"/>
</dbReference>
<dbReference type="Bgee" id="WBGene00022042">
    <property type="expression patterns" value="Expressed in germ line (C elegans) and 4 other cell types or tissues"/>
</dbReference>
<dbReference type="GO" id="GO:0005737">
    <property type="term" value="C:cytoplasm"/>
    <property type="evidence" value="ECO:0000318"/>
    <property type="project" value="GO_Central"/>
</dbReference>
<dbReference type="GO" id="GO:0005854">
    <property type="term" value="C:nascent polypeptide-associated complex"/>
    <property type="evidence" value="ECO:0000303"/>
    <property type="project" value="ComplexPortal"/>
</dbReference>
<dbReference type="GO" id="GO:0051082">
    <property type="term" value="F:unfolded protein binding"/>
    <property type="evidence" value="ECO:0000318"/>
    <property type="project" value="GO_Central"/>
</dbReference>
<dbReference type="GO" id="GO:1905551">
    <property type="term" value="P:negative regulation of protein localization to endoplasmic reticulum"/>
    <property type="evidence" value="ECO:0000303"/>
    <property type="project" value="ComplexPortal"/>
</dbReference>
<dbReference type="GO" id="GO:0006612">
    <property type="term" value="P:protein targeting to membrane"/>
    <property type="evidence" value="ECO:0000318"/>
    <property type="project" value="GO_Central"/>
</dbReference>
<dbReference type="GO" id="GO:0015031">
    <property type="term" value="P:protein transport"/>
    <property type="evidence" value="ECO:0007669"/>
    <property type="project" value="UniProtKB-KW"/>
</dbReference>
<dbReference type="GO" id="GO:1900034">
    <property type="term" value="P:regulation of cellular response to heat"/>
    <property type="evidence" value="ECO:0000303"/>
    <property type="project" value="ComplexPortal"/>
</dbReference>
<dbReference type="CDD" id="cd22054">
    <property type="entry name" value="NAC_NACA"/>
    <property type="match status" value="1"/>
</dbReference>
<dbReference type="CDD" id="cd14358">
    <property type="entry name" value="UBA_NAC_euk"/>
    <property type="match status" value="1"/>
</dbReference>
<dbReference type="FunFam" id="2.20.70.30:FF:000002">
    <property type="entry name" value="Nascent polypeptide-associated complex (NAC), alpha subunit"/>
    <property type="match status" value="1"/>
</dbReference>
<dbReference type="Gene3D" id="1.10.8.10">
    <property type="entry name" value="DNA helicase RuvA subunit, C-terminal domain"/>
    <property type="match status" value="1"/>
</dbReference>
<dbReference type="Gene3D" id="2.20.70.30">
    <property type="entry name" value="Nascent polypeptide-associated complex domain"/>
    <property type="match status" value="1"/>
</dbReference>
<dbReference type="InterPro" id="IPR016641">
    <property type="entry name" value="EGD2/NACA0like"/>
</dbReference>
<dbReference type="InterPro" id="IPR044034">
    <property type="entry name" value="NAC-like_UBA"/>
</dbReference>
<dbReference type="InterPro" id="IPR038187">
    <property type="entry name" value="NAC_A/B_dom_sf"/>
</dbReference>
<dbReference type="InterPro" id="IPR002715">
    <property type="entry name" value="Nas_poly-pep-assoc_cplx_dom"/>
</dbReference>
<dbReference type="PANTHER" id="PTHR21713">
    <property type="entry name" value="NASCENT POLYPEPTIDE ASSOCIATED COMPLEX ALPHA SUBUNIT-RELATED"/>
    <property type="match status" value="1"/>
</dbReference>
<dbReference type="Pfam" id="PF01849">
    <property type="entry name" value="NAC"/>
    <property type="match status" value="1"/>
</dbReference>
<dbReference type="Pfam" id="PF19026">
    <property type="entry name" value="UBA_HYPK"/>
    <property type="match status" value="1"/>
</dbReference>
<dbReference type="PIRSF" id="PIRSF015901">
    <property type="entry name" value="NAC_alpha"/>
    <property type="match status" value="1"/>
</dbReference>
<dbReference type="SMART" id="SM01407">
    <property type="entry name" value="NAC"/>
    <property type="match status" value="1"/>
</dbReference>
<dbReference type="PROSITE" id="PS51151">
    <property type="entry name" value="NAC_AB"/>
    <property type="match status" value="1"/>
</dbReference>
<accession>Q86S66</accession>
<accession>Q9N2Z8</accession>
<proteinExistence type="evidence at protein level"/>
<organism>
    <name type="scientific">Caenorhabditis elegans</name>
    <dbReference type="NCBI Taxonomy" id="6239"/>
    <lineage>
        <taxon>Eukaryota</taxon>
        <taxon>Metazoa</taxon>
        <taxon>Ecdysozoa</taxon>
        <taxon>Nematoda</taxon>
        <taxon>Chromadorea</taxon>
        <taxon>Rhabditida</taxon>
        <taxon>Rhabditina</taxon>
        <taxon>Rhabditomorpha</taxon>
        <taxon>Rhabditoidea</taxon>
        <taxon>Rhabditidae</taxon>
        <taxon>Peloderinae</taxon>
        <taxon>Caenorhabditis</taxon>
    </lineage>
</organism>
<name>NACA_CAEEL</name>
<comment type="function">
    <text evidence="1 4">May prevent inappropriate targeting of non-secretory polypeptides to the endoplasmic reticulum (ER) (By similarity). Plays a role in the response to heat stress (PubMed:22957041).</text>
</comment>
<comment type="subunit">
    <text evidence="1">May be part of the nascent polypeptide-associated complex (NAC), which is a heterodimer of icd-2 and icd-1 (via NAC-A/B domains).</text>
</comment>
<comment type="interaction">
    <interactant intactId="EBI-326549">
        <id>Q86S66</id>
    </interactant>
    <interactant intactId="EBI-326535">
        <id>H2KZY3</id>
        <label>CELE_F49E8.7</label>
    </interactant>
    <organismsDiffer>false</organismsDiffer>
    <experiments>5</experiments>
</comment>
<comment type="interaction">
    <interactant intactId="EBI-326549">
        <id>Q86S66</id>
    </interactant>
    <interactant intactId="EBI-326530">
        <id>Q18885</id>
        <label>icd-1</label>
    </interactant>
    <organismsDiffer>false</organismsDiffer>
    <experiments>6</experiments>
</comment>
<comment type="subcellular location">
    <subcellularLocation>
        <location evidence="1">Cytoplasm</location>
    </subcellularLocation>
</comment>
<comment type="disruption phenotype">
    <text evidence="4">RNAi-mediated knockdown in larvae results in increased survival and mobility in response to a constant temperature of 36 degrees Celsius, when compared to wild-type.</text>
</comment>
<comment type="similarity">
    <text evidence="6">Belongs to the NAC-alpha family.</text>
</comment>
<evidence type="ECO:0000250" key="1">
    <source>
        <dbReference type="UniProtKB" id="Q13765"/>
    </source>
</evidence>
<evidence type="ECO:0000255" key="2">
    <source>
        <dbReference type="PROSITE-ProRule" id="PRU00507"/>
    </source>
</evidence>
<evidence type="ECO:0000256" key="3">
    <source>
        <dbReference type="SAM" id="MobiDB-lite"/>
    </source>
</evidence>
<evidence type="ECO:0000269" key="4">
    <source>
    </source>
</evidence>
<evidence type="ECO:0000303" key="5">
    <source>
    </source>
</evidence>
<evidence type="ECO:0000305" key="6"/>
<evidence type="ECO:0000312" key="7">
    <source>
        <dbReference type="WormBase" id="Y65B4BR.5"/>
    </source>
</evidence>
<protein>
    <recommendedName>
        <fullName>Nascent polypeptide-associated complex subunit alpha</fullName>
        <shortName>NAC-alpha</shortName>
    </recommendedName>
    <alternativeName>
        <fullName>Alpha-NAC</fullName>
    </alternativeName>
    <alternativeName>
        <fullName evidence="7">Inhibitor of cell death 2</fullName>
    </alternativeName>
</protein>
<gene>
    <name evidence="5 7" type="primary">icd-2</name>
    <name evidence="7" type="ORF">Y65B4BR.5</name>
</gene>